<dbReference type="EMBL" id="AF132026">
    <property type="protein sequence ID" value="AAG38953.1"/>
    <property type="molecule type" value="mRNA"/>
</dbReference>
<dbReference type="EMBL" id="AL136900">
    <property type="protein sequence ID" value="CAB66834.2"/>
    <property type="molecule type" value="mRNA"/>
</dbReference>
<dbReference type="EMBL" id="BC027617">
    <property type="protein sequence ID" value="AAH27617.1"/>
    <property type="molecule type" value="mRNA"/>
</dbReference>
<dbReference type="CCDS" id="CCDS9311.1"/>
<dbReference type="RefSeq" id="NP_112241.2">
    <property type="nucleotide sequence ID" value="NM_030979.2"/>
</dbReference>
<dbReference type="PDB" id="2D9P">
    <property type="method" value="NMR"/>
    <property type="chains" value="A=286-375"/>
</dbReference>
<dbReference type="PDB" id="4IVE">
    <property type="method" value="X-ray"/>
    <property type="resolution" value="2.30 A"/>
    <property type="chains" value="A/B/C/D=535-631"/>
</dbReference>
<dbReference type="PDBsum" id="2D9P"/>
<dbReference type="PDBsum" id="4IVE"/>
<dbReference type="SMR" id="Q9H361"/>
<dbReference type="BioGRID" id="111079">
    <property type="interactions" value="85"/>
</dbReference>
<dbReference type="FunCoup" id="Q9H361">
    <property type="interactions" value="1173"/>
</dbReference>
<dbReference type="IntAct" id="Q9H361">
    <property type="interactions" value="37"/>
</dbReference>
<dbReference type="MINT" id="Q9H361"/>
<dbReference type="STRING" id="9606.ENSP00000281589"/>
<dbReference type="GlyGen" id="Q9H361">
    <property type="glycosylation" value="4 sites, 1 N-linked glycan (1 site), 1 O-linked glycan (2 sites)"/>
</dbReference>
<dbReference type="iPTMnet" id="Q9H361"/>
<dbReference type="MetOSite" id="Q9H361"/>
<dbReference type="PhosphoSitePlus" id="Q9H361"/>
<dbReference type="SwissPalm" id="Q9H361"/>
<dbReference type="BioMuta" id="PABPC3"/>
<dbReference type="DMDM" id="28201852"/>
<dbReference type="jPOST" id="Q9H361"/>
<dbReference type="MassIVE" id="Q9H361"/>
<dbReference type="PaxDb" id="9606-ENSP00000281589"/>
<dbReference type="PeptideAtlas" id="Q9H361"/>
<dbReference type="ProteomicsDB" id="80679"/>
<dbReference type="Pumba" id="Q9H361"/>
<dbReference type="Antibodypedia" id="22538">
    <property type="antibodies" value="101 antibodies from 27 providers"/>
</dbReference>
<dbReference type="DNASU" id="5042"/>
<dbReference type="Ensembl" id="ENST00000281589.5">
    <property type="protein sequence ID" value="ENSP00000281589.3"/>
    <property type="gene ID" value="ENSG00000151846.9"/>
</dbReference>
<dbReference type="GeneID" id="5042"/>
<dbReference type="KEGG" id="hsa:5042"/>
<dbReference type="MANE-Select" id="ENST00000281589.5">
    <property type="protein sequence ID" value="ENSP00000281589.3"/>
    <property type="RefSeq nucleotide sequence ID" value="NM_030979.3"/>
    <property type="RefSeq protein sequence ID" value="NP_112241.2"/>
</dbReference>
<dbReference type="UCSC" id="uc001upy.4">
    <property type="organism name" value="human"/>
</dbReference>
<dbReference type="AGR" id="HGNC:8556"/>
<dbReference type="CTD" id="5042"/>
<dbReference type="DisGeNET" id="5042"/>
<dbReference type="GeneCards" id="PABPC3"/>
<dbReference type="HGNC" id="HGNC:8556">
    <property type="gene designation" value="PABPC3"/>
</dbReference>
<dbReference type="HPA" id="ENSG00000151846">
    <property type="expression patterns" value="Tissue enriched (testis)"/>
</dbReference>
<dbReference type="MIM" id="604680">
    <property type="type" value="gene"/>
</dbReference>
<dbReference type="neXtProt" id="NX_Q9H361"/>
<dbReference type="OpenTargets" id="ENSG00000151846"/>
<dbReference type="PharmGKB" id="PA32882"/>
<dbReference type="VEuPathDB" id="HostDB:ENSG00000151846"/>
<dbReference type="eggNOG" id="KOG0123">
    <property type="taxonomic scope" value="Eukaryota"/>
</dbReference>
<dbReference type="GeneTree" id="ENSGT00940000153773"/>
<dbReference type="HOGENOM" id="CLU_012062_22_2_1"/>
<dbReference type="InParanoid" id="Q9H361"/>
<dbReference type="OrthoDB" id="9480006at2759"/>
<dbReference type="PAN-GO" id="Q9H361">
    <property type="GO annotations" value="7 GO annotations based on evolutionary models"/>
</dbReference>
<dbReference type="PhylomeDB" id="Q9H361"/>
<dbReference type="TreeFam" id="TF300458"/>
<dbReference type="PathwayCommons" id="Q9H361"/>
<dbReference type="SignaLink" id="Q9H361"/>
<dbReference type="SIGNOR" id="Q9H361"/>
<dbReference type="BioGRID-ORCS" id="5042">
    <property type="hits" value="7 hits in 1151 CRISPR screens"/>
</dbReference>
<dbReference type="CD-CODE" id="232F8A39">
    <property type="entry name" value="P-body"/>
</dbReference>
<dbReference type="CD-CODE" id="91857CE7">
    <property type="entry name" value="Nucleolus"/>
</dbReference>
<dbReference type="CD-CODE" id="DEE660B4">
    <property type="entry name" value="Stress granule"/>
</dbReference>
<dbReference type="EvolutionaryTrace" id="Q9H361"/>
<dbReference type="GeneWiki" id="PABPC3"/>
<dbReference type="GenomeRNAi" id="5042"/>
<dbReference type="Pharos" id="Q9H361">
    <property type="development level" value="Tbio"/>
</dbReference>
<dbReference type="PRO" id="PR:Q9H361"/>
<dbReference type="Proteomes" id="UP000005640">
    <property type="component" value="Chromosome 13"/>
</dbReference>
<dbReference type="RNAct" id="Q9H361">
    <property type="molecule type" value="protein"/>
</dbReference>
<dbReference type="Bgee" id="ENSG00000151846">
    <property type="expression patterns" value="Expressed in parotid gland and 165 other cell types or tissues"/>
</dbReference>
<dbReference type="ExpressionAtlas" id="Q9H361">
    <property type="expression patterns" value="baseline and differential"/>
</dbReference>
<dbReference type="GO" id="GO:0005737">
    <property type="term" value="C:cytoplasm"/>
    <property type="evidence" value="ECO:0000303"/>
    <property type="project" value="UniProtKB"/>
</dbReference>
<dbReference type="GO" id="GO:0010494">
    <property type="term" value="C:cytoplasmic stress granule"/>
    <property type="evidence" value="ECO:0000318"/>
    <property type="project" value="GO_Central"/>
</dbReference>
<dbReference type="GO" id="GO:0005829">
    <property type="term" value="C:cytosol"/>
    <property type="evidence" value="ECO:0000318"/>
    <property type="project" value="GO_Central"/>
</dbReference>
<dbReference type="GO" id="GO:0070062">
    <property type="term" value="C:extracellular exosome"/>
    <property type="evidence" value="ECO:0007005"/>
    <property type="project" value="UniProtKB"/>
</dbReference>
<dbReference type="GO" id="GO:0005634">
    <property type="term" value="C:nucleus"/>
    <property type="evidence" value="ECO:0000318"/>
    <property type="project" value="GO_Central"/>
</dbReference>
<dbReference type="GO" id="GO:1990904">
    <property type="term" value="C:ribonucleoprotein complex"/>
    <property type="evidence" value="ECO:0000318"/>
    <property type="project" value="GO_Central"/>
</dbReference>
<dbReference type="GO" id="GO:0003730">
    <property type="term" value="F:mRNA 3'-UTR binding"/>
    <property type="evidence" value="ECO:0000318"/>
    <property type="project" value="GO_Central"/>
</dbReference>
<dbReference type="GO" id="GO:0008143">
    <property type="term" value="F:poly(A) binding"/>
    <property type="evidence" value="ECO:0000314"/>
    <property type="project" value="UniProtKB"/>
</dbReference>
<dbReference type="GO" id="GO:0008266">
    <property type="term" value="F:poly(U) RNA binding"/>
    <property type="evidence" value="ECO:0000318"/>
    <property type="project" value="GO_Central"/>
</dbReference>
<dbReference type="GO" id="GO:0016071">
    <property type="term" value="P:mRNA metabolic process"/>
    <property type="evidence" value="ECO:0000303"/>
    <property type="project" value="UniProtKB"/>
</dbReference>
<dbReference type="CDD" id="cd12378">
    <property type="entry name" value="RRM1_I_PABPs"/>
    <property type="match status" value="1"/>
</dbReference>
<dbReference type="CDD" id="cd12379">
    <property type="entry name" value="RRM2_I_PABPs"/>
    <property type="match status" value="1"/>
</dbReference>
<dbReference type="CDD" id="cd12380">
    <property type="entry name" value="RRM3_I_PABPs"/>
    <property type="match status" value="1"/>
</dbReference>
<dbReference type="CDD" id="cd12381">
    <property type="entry name" value="RRM4_I_PABPs"/>
    <property type="match status" value="1"/>
</dbReference>
<dbReference type="FunFam" id="1.10.1900.10:FF:000001">
    <property type="entry name" value="Polyadenylate-binding protein"/>
    <property type="match status" value="1"/>
</dbReference>
<dbReference type="FunFam" id="3.30.70.330:FF:000003">
    <property type="entry name" value="Polyadenylate-binding protein"/>
    <property type="match status" value="1"/>
</dbReference>
<dbReference type="FunFam" id="3.30.70.330:FF:000021">
    <property type="entry name" value="Polyadenylate-binding protein"/>
    <property type="match status" value="1"/>
</dbReference>
<dbReference type="FunFam" id="3.30.70.330:FF:000042">
    <property type="entry name" value="Polyadenylate-binding protein"/>
    <property type="match status" value="1"/>
</dbReference>
<dbReference type="FunFam" id="3.30.70.330:FF:000154">
    <property type="entry name" value="Polyadenylate-binding protein"/>
    <property type="match status" value="1"/>
</dbReference>
<dbReference type="Gene3D" id="3.30.70.330">
    <property type="match status" value="4"/>
</dbReference>
<dbReference type="Gene3D" id="1.10.1900.10">
    <property type="entry name" value="c-terminal domain of poly(a) binding protein"/>
    <property type="match status" value="1"/>
</dbReference>
<dbReference type="InterPro" id="IPR012677">
    <property type="entry name" value="Nucleotide-bd_a/b_plait_sf"/>
</dbReference>
<dbReference type="InterPro" id="IPR036053">
    <property type="entry name" value="PABP-dom"/>
</dbReference>
<dbReference type="InterPro" id="IPR006515">
    <property type="entry name" value="PABP_1234"/>
</dbReference>
<dbReference type="InterPro" id="IPR002004">
    <property type="entry name" value="PABP_HYD_C"/>
</dbReference>
<dbReference type="InterPro" id="IPR034364">
    <property type="entry name" value="PABP_RRM1"/>
</dbReference>
<dbReference type="InterPro" id="IPR035979">
    <property type="entry name" value="RBD_domain_sf"/>
</dbReference>
<dbReference type="InterPro" id="IPR045305">
    <property type="entry name" value="RRM2_I_PABPs"/>
</dbReference>
<dbReference type="InterPro" id="IPR000504">
    <property type="entry name" value="RRM_dom"/>
</dbReference>
<dbReference type="InterPro" id="IPR003954">
    <property type="entry name" value="RRM_dom_euk"/>
</dbReference>
<dbReference type="NCBIfam" id="TIGR01628">
    <property type="entry name" value="PABP-1234"/>
    <property type="match status" value="1"/>
</dbReference>
<dbReference type="PANTHER" id="PTHR24012">
    <property type="entry name" value="RNA BINDING PROTEIN"/>
    <property type="match status" value="1"/>
</dbReference>
<dbReference type="Pfam" id="PF00658">
    <property type="entry name" value="MLLE"/>
    <property type="match status" value="1"/>
</dbReference>
<dbReference type="Pfam" id="PF00076">
    <property type="entry name" value="RRM_1"/>
    <property type="match status" value="4"/>
</dbReference>
<dbReference type="SMART" id="SM00517">
    <property type="entry name" value="PolyA"/>
    <property type="match status" value="1"/>
</dbReference>
<dbReference type="SMART" id="SM00360">
    <property type="entry name" value="RRM"/>
    <property type="match status" value="4"/>
</dbReference>
<dbReference type="SMART" id="SM00361">
    <property type="entry name" value="RRM_1"/>
    <property type="match status" value="3"/>
</dbReference>
<dbReference type="SUPFAM" id="SSF63570">
    <property type="entry name" value="PABC (PABP) domain"/>
    <property type="match status" value="1"/>
</dbReference>
<dbReference type="SUPFAM" id="SSF54928">
    <property type="entry name" value="RNA-binding domain, RBD"/>
    <property type="match status" value="2"/>
</dbReference>
<dbReference type="PROSITE" id="PS51309">
    <property type="entry name" value="PABC"/>
    <property type="match status" value="1"/>
</dbReference>
<dbReference type="PROSITE" id="PS50102">
    <property type="entry name" value="RRM"/>
    <property type="match status" value="4"/>
</dbReference>
<evidence type="ECO:0000250" key="1"/>
<evidence type="ECO:0000250" key="2">
    <source>
        <dbReference type="UniProtKB" id="Q13310"/>
    </source>
</evidence>
<evidence type="ECO:0000255" key="3">
    <source>
        <dbReference type="PROSITE-ProRule" id="PRU00176"/>
    </source>
</evidence>
<evidence type="ECO:0000255" key="4">
    <source>
        <dbReference type="PROSITE-ProRule" id="PRU00641"/>
    </source>
</evidence>
<evidence type="ECO:0000269" key="5">
    <source>
    </source>
</evidence>
<evidence type="ECO:0000305" key="6"/>
<evidence type="ECO:0007829" key="7">
    <source>
        <dbReference type="PDB" id="4IVE"/>
    </source>
</evidence>
<sequence length="631" mass="70031">MNPSTPSYPTASLYVGDLHPDVTEAMLYEKFSPAGPILSIRICRDLITSGSSNYAYVNFQHTKDAEHALDTMNFDVIKGKPVRIMWSQRDPSLRKSGVGNIFVKNLDKSINNKALYDTVSAFGNILSCNVVCDENGSKGYGFVHFETHEAAERAIKKMNGMLLNGRKVFVGQFKSRKEREAELGARAKEFPNVYIKNFGEDMDDERLKDLFGKFGPALSVKVMTDESGKSKGFGFVSFERHEDAQKAVDEMNGKELNGKQIYVGRAQKKVERQTELKRTFEQMKQDRITRYQVVNLYVKNLDDGIDDERLRKAFSPFGTITSAKVMMEGGRSKGFGFVCFSSPEEATKAVTEMNGRIVATKPLYVALAQRKEERQAYLTNEYMQRMASVRAVPNQRAPPSGYFMTAVPQTQNHAAYYPPSQIARLRPSPRWTAQGARPHPFQNKPSAIRPGAPRVPFSTMRPASSQVPRVMSTQRVANTSTQTVGPRPAAAAAAAATPAVRTVPRYKYAAGVRNPQQHRNAQPQVTMQQLAVHVQGQETLTASRLASAPPQKQKQMLGERLFPLIQAMHPTLAGKITGMLLEIDNSELLYMLESPESLRSKVDEAVAVLQAHQAKEATQKAVNSATGVPTV</sequence>
<accession>Q9H361</accession>
<accession>Q8NHV0</accession>
<accession>Q9H086</accession>
<protein>
    <recommendedName>
        <fullName>Polyadenylate-binding protein 3</fullName>
        <shortName>PABP-3</shortName>
        <shortName>Poly(A)-binding protein 3</shortName>
    </recommendedName>
    <alternativeName>
        <fullName>Testis-specific poly(A)-binding protein</fullName>
    </alternativeName>
</protein>
<name>PABP3_HUMAN</name>
<comment type="function">
    <text>Binds the poly(A) tail of mRNA. May be involved in cytoplasmic regulatory processes of mRNA metabolism. Binds poly(A) with a slightly lower affinity as compared to PABPC1.</text>
</comment>
<comment type="interaction">
    <interactant intactId="EBI-1055272">
        <id>Q9H361</id>
    </interactant>
    <interactant intactId="EBI-1055254">
        <id>Q8WXH2</id>
        <label>JPH3</label>
    </interactant>
    <organismsDiffer>false</organismsDiffer>
    <experiments>3</experiments>
</comment>
<comment type="interaction">
    <interactant intactId="EBI-1055272">
        <id>Q9H361</id>
    </interactant>
    <interactant intactId="EBI-744726">
        <id>Q8NEK8</id>
        <label>TENT5D</label>
    </interactant>
    <organismsDiffer>false</organismsDiffer>
    <experiments>3</experiments>
</comment>
<comment type="interaction">
    <interactant intactId="EBI-1055272">
        <id>Q9H361</id>
    </interactant>
    <interactant intactId="EBI-720609">
        <id>O76024</id>
        <label>WFS1</label>
    </interactant>
    <organismsDiffer>false</organismsDiffer>
    <experiments>3</experiments>
</comment>
<comment type="subcellular location">
    <subcellularLocation>
        <location evidence="1">Cytoplasm</location>
    </subcellularLocation>
</comment>
<comment type="tissue specificity">
    <text evidence="5">Testis specific.</text>
</comment>
<comment type="similarity">
    <text evidence="6">Belongs to the polyadenylate-binding protein type-1 family.</text>
</comment>
<keyword id="KW-0002">3D-structure</keyword>
<keyword id="KW-0963">Cytoplasm</keyword>
<keyword id="KW-1017">Isopeptide bond</keyword>
<keyword id="KW-0488">Methylation</keyword>
<keyword id="KW-0597">Phosphoprotein</keyword>
<keyword id="KW-1267">Proteomics identification</keyword>
<keyword id="KW-1185">Reference proteome</keyword>
<keyword id="KW-0677">Repeat</keyword>
<keyword id="KW-0694">RNA-binding</keyword>
<keyword id="KW-0832">Ubl conjugation</keyword>
<proteinExistence type="evidence at protein level"/>
<feature type="chain" id="PRO_0000081702" description="Polyadenylate-binding protein 3">
    <location>
        <begin position="1"/>
        <end position="631"/>
    </location>
</feature>
<feature type="domain" description="RRM 1" evidence="3">
    <location>
        <begin position="11"/>
        <end position="89"/>
    </location>
</feature>
<feature type="domain" description="RRM 2" evidence="3">
    <location>
        <begin position="99"/>
        <end position="175"/>
    </location>
</feature>
<feature type="domain" description="RRM 3" evidence="3">
    <location>
        <begin position="191"/>
        <end position="268"/>
    </location>
</feature>
<feature type="domain" description="RRM 4" evidence="3">
    <location>
        <begin position="294"/>
        <end position="370"/>
    </location>
</feature>
<feature type="domain" description="PABC" evidence="4">
    <location>
        <begin position="537"/>
        <end position="614"/>
    </location>
</feature>
<feature type="modified residue" description="Phosphotyrosine" evidence="2">
    <location>
        <position position="140"/>
    </location>
</feature>
<feature type="modified residue" description="Phosphoserine" evidence="2">
    <location>
        <position position="315"/>
    </location>
</feature>
<feature type="modified residue" description="N6,N6-dimethyllysine; alternate" evidence="2">
    <location>
        <position position="361"/>
    </location>
</feature>
<feature type="modified residue" description="Phosphotyrosine" evidence="2">
    <location>
        <position position="364"/>
    </location>
</feature>
<feature type="modified residue" description="Omega-N-methylarginine" evidence="2">
    <location>
        <position position="426"/>
    </location>
</feature>
<feature type="modified residue" description="Omega-N-methylarginine" evidence="2">
    <location>
        <position position="430"/>
    </location>
</feature>
<feature type="modified residue" description="Omega-N-methylarginine" evidence="2">
    <location>
        <position position="449"/>
    </location>
</feature>
<feature type="modified residue" description="Dimethylated arginine" evidence="2">
    <location>
        <position position="501"/>
    </location>
</feature>
<feature type="modified residue" description="Omega-N-methylarginine" evidence="2">
    <location>
        <position position="513"/>
    </location>
</feature>
<feature type="cross-link" description="Glycyl lysine isopeptide (Lys-Gly) (interchain with G-Cter in SUMO2); alternate" evidence="2">
    <location>
        <position position="361"/>
    </location>
</feature>
<feature type="sequence conflict" description="In Ref. 2; CAB66834." evidence="6" ref="2">
    <original>KV</original>
    <variation>EL</variation>
    <location>
        <begin position="221"/>
        <end position="222"/>
    </location>
</feature>
<feature type="sequence conflict" description="In Ref. 1; AAG38953." evidence="6" ref="1">
    <original>A</original>
    <variation>R</variation>
    <location>
        <position position="492"/>
    </location>
</feature>
<feature type="helix" evidence="7">
    <location>
        <begin position="542"/>
        <end position="546"/>
    </location>
</feature>
<feature type="helix" evidence="7">
    <location>
        <begin position="550"/>
        <end position="568"/>
    </location>
</feature>
<feature type="turn" evidence="7">
    <location>
        <begin position="570"/>
        <end position="572"/>
    </location>
</feature>
<feature type="helix" evidence="7">
    <location>
        <begin position="573"/>
        <end position="580"/>
    </location>
</feature>
<feature type="helix" evidence="7">
    <location>
        <begin position="585"/>
        <end position="592"/>
    </location>
</feature>
<feature type="helix" evidence="7">
    <location>
        <begin position="595"/>
        <end position="609"/>
    </location>
</feature>
<gene>
    <name type="primary">PABPC3</name>
    <name type="synonym">PABP3</name>
    <name type="synonym">PABPL3</name>
</gene>
<reference key="1">
    <citation type="journal article" date="2001" name="Nucleic Acids Res.">
        <title>Human testis expresses a specific poly(A)-binding protein.</title>
        <authorList>
            <person name="Feral C."/>
            <person name="Guellaen G."/>
            <person name="Pawlak A."/>
        </authorList>
    </citation>
    <scope>NUCLEOTIDE SEQUENCE [MRNA]</scope>
    <scope>CHARACTERIZATION</scope>
    <scope>TISSUE SPECIFICITY</scope>
    <source>
        <tissue>Testis</tissue>
    </source>
</reference>
<reference key="2">
    <citation type="journal article" date="2001" name="Genome Res.">
        <title>Towards a catalog of human genes and proteins: sequencing and analysis of 500 novel complete protein coding human cDNAs.</title>
        <authorList>
            <person name="Wiemann S."/>
            <person name="Weil B."/>
            <person name="Wellenreuther R."/>
            <person name="Gassenhuber J."/>
            <person name="Glassl S."/>
            <person name="Ansorge W."/>
            <person name="Boecher M."/>
            <person name="Bloecker H."/>
            <person name="Bauersachs S."/>
            <person name="Blum H."/>
            <person name="Lauber J."/>
            <person name="Duesterhoeft A."/>
            <person name="Beyer A."/>
            <person name="Koehrer K."/>
            <person name="Strack N."/>
            <person name="Mewes H.-W."/>
            <person name="Ottenwaelder B."/>
            <person name="Obermaier B."/>
            <person name="Tampe J."/>
            <person name="Heubner D."/>
            <person name="Wambutt R."/>
            <person name="Korn B."/>
            <person name="Klein M."/>
            <person name="Poustka A."/>
        </authorList>
    </citation>
    <scope>NUCLEOTIDE SEQUENCE [LARGE SCALE MRNA]</scope>
    <source>
        <tissue>Testis</tissue>
    </source>
</reference>
<reference key="3">
    <citation type="journal article" date="2004" name="Genome Res.">
        <title>The status, quality, and expansion of the NIH full-length cDNA project: the Mammalian Gene Collection (MGC).</title>
        <authorList>
            <consortium name="The MGC Project Team"/>
        </authorList>
    </citation>
    <scope>NUCLEOTIDE SEQUENCE [LARGE SCALE MRNA]</scope>
    <source>
        <tissue>Testis</tissue>
    </source>
</reference>
<reference key="4">
    <citation type="submission" date="2006-06" db="PDB data bank">
        <title>Solution structure of RNA binding domain 4 in polyadenylation binding protein 3.</title>
        <authorList>
            <consortium name="RIKEN structural genomics initiative (RSGI)"/>
        </authorList>
    </citation>
    <scope>STRUCTURE BY NMR OF 286-376</scope>
</reference>
<organism>
    <name type="scientific">Homo sapiens</name>
    <name type="common">Human</name>
    <dbReference type="NCBI Taxonomy" id="9606"/>
    <lineage>
        <taxon>Eukaryota</taxon>
        <taxon>Metazoa</taxon>
        <taxon>Chordata</taxon>
        <taxon>Craniata</taxon>
        <taxon>Vertebrata</taxon>
        <taxon>Euteleostomi</taxon>
        <taxon>Mammalia</taxon>
        <taxon>Eutheria</taxon>
        <taxon>Euarchontoglires</taxon>
        <taxon>Primates</taxon>
        <taxon>Haplorrhini</taxon>
        <taxon>Catarrhini</taxon>
        <taxon>Hominidae</taxon>
        <taxon>Homo</taxon>
    </lineage>
</organism>